<dbReference type="EC" id="2.4.2.22" evidence="1"/>
<dbReference type="EMBL" id="CP000557">
    <property type="protein sequence ID" value="ABO66767.1"/>
    <property type="molecule type" value="Genomic_DNA"/>
</dbReference>
<dbReference type="RefSeq" id="WP_008879315.1">
    <property type="nucleotide sequence ID" value="NC_009328.1"/>
</dbReference>
<dbReference type="SMR" id="A4IN63"/>
<dbReference type="KEGG" id="gtn:GTNG_1397"/>
<dbReference type="eggNOG" id="COG0503">
    <property type="taxonomic scope" value="Bacteria"/>
</dbReference>
<dbReference type="HOGENOM" id="CLU_099015_0_0_9"/>
<dbReference type="UniPathway" id="UPA00602">
    <property type="reaction ID" value="UER00658"/>
</dbReference>
<dbReference type="Proteomes" id="UP000001578">
    <property type="component" value="Chromosome"/>
</dbReference>
<dbReference type="GO" id="GO:0005737">
    <property type="term" value="C:cytoplasm"/>
    <property type="evidence" value="ECO:0007669"/>
    <property type="project" value="UniProtKB-SubCell"/>
</dbReference>
<dbReference type="GO" id="GO:0000310">
    <property type="term" value="F:xanthine phosphoribosyltransferase activity"/>
    <property type="evidence" value="ECO:0007669"/>
    <property type="project" value="UniProtKB-UniRule"/>
</dbReference>
<dbReference type="GO" id="GO:0006166">
    <property type="term" value="P:purine ribonucleoside salvage"/>
    <property type="evidence" value="ECO:0007669"/>
    <property type="project" value="UniProtKB-KW"/>
</dbReference>
<dbReference type="GO" id="GO:0046110">
    <property type="term" value="P:xanthine metabolic process"/>
    <property type="evidence" value="ECO:0007669"/>
    <property type="project" value="InterPro"/>
</dbReference>
<dbReference type="GO" id="GO:0032265">
    <property type="term" value="P:XMP salvage"/>
    <property type="evidence" value="ECO:0007669"/>
    <property type="project" value="UniProtKB-UniRule"/>
</dbReference>
<dbReference type="CDD" id="cd06223">
    <property type="entry name" value="PRTases_typeI"/>
    <property type="match status" value="1"/>
</dbReference>
<dbReference type="Gene3D" id="3.40.50.2020">
    <property type="match status" value="1"/>
</dbReference>
<dbReference type="HAMAP" id="MF_01184">
    <property type="entry name" value="XPRTase"/>
    <property type="match status" value="1"/>
</dbReference>
<dbReference type="InterPro" id="IPR000836">
    <property type="entry name" value="PRibTrfase_dom"/>
</dbReference>
<dbReference type="InterPro" id="IPR029057">
    <property type="entry name" value="PRTase-like"/>
</dbReference>
<dbReference type="InterPro" id="IPR050118">
    <property type="entry name" value="Pur/Pyrimidine_PRTase"/>
</dbReference>
<dbReference type="InterPro" id="IPR010079">
    <property type="entry name" value="Xanthine_PRibTrfase"/>
</dbReference>
<dbReference type="NCBIfam" id="NF006671">
    <property type="entry name" value="PRK09219.1"/>
    <property type="match status" value="1"/>
</dbReference>
<dbReference type="NCBIfam" id="TIGR01744">
    <property type="entry name" value="XPRTase"/>
    <property type="match status" value="1"/>
</dbReference>
<dbReference type="PANTHER" id="PTHR43864">
    <property type="entry name" value="HYPOXANTHINE/GUANINE PHOSPHORIBOSYLTRANSFERASE"/>
    <property type="match status" value="1"/>
</dbReference>
<dbReference type="PANTHER" id="PTHR43864:SF1">
    <property type="entry name" value="XANTHINE PHOSPHORIBOSYLTRANSFERASE"/>
    <property type="match status" value="1"/>
</dbReference>
<dbReference type="Pfam" id="PF00156">
    <property type="entry name" value="Pribosyltran"/>
    <property type="match status" value="1"/>
</dbReference>
<dbReference type="SUPFAM" id="SSF53271">
    <property type="entry name" value="PRTase-like"/>
    <property type="match status" value="1"/>
</dbReference>
<name>XPT_GEOTN</name>
<evidence type="ECO:0000255" key="1">
    <source>
        <dbReference type="HAMAP-Rule" id="MF_01184"/>
    </source>
</evidence>
<proteinExistence type="inferred from homology"/>
<feature type="chain" id="PRO_0000339700" description="Xanthine phosphoribosyltransferase">
    <location>
        <begin position="1"/>
        <end position="194"/>
    </location>
</feature>
<feature type="binding site" evidence="1">
    <location>
        <position position="20"/>
    </location>
    <ligand>
        <name>xanthine</name>
        <dbReference type="ChEBI" id="CHEBI:17712"/>
    </ligand>
</feature>
<feature type="binding site" evidence="1">
    <location>
        <position position="27"/>
    </location>
    <ligand>
        <name>xanthine</name>
        <dbReference type="ChEBI" id="CHEBI:17712"/>
    </ligand>
</feature>
<feature type="binding site" evidence="1">
    <location>
        <begin position="128"/>
        <end position="132"/>
    </location>
    <ligand>
        <name>5-phospho-alpha-D-ribose 1-diphosphate</name>
        <dbReference type="ChEBI" id="CHEBI:58017"/>
    </ligand>
</feature>
<feature type="binding site" evidence="1">
    <location>
        <position position="156"/>
    </location>
    <ligand>
        <name>xanthine</name>
        <dbReference type="ChEBI" id="CHEBI:17712"/>
    </ligand>
</feature>
<protein>
    <recommendedName>
        <fullName evidence="1">Xanthine phosphoribosyltransferase</fullName>
        <shortName evidence="1">XPRTase</shortName>
        <ecNumber evidence="1">2.4.2.22</ecNumber>
    </recommendedName>
</protein>
<sequence length="194" mass="21406">MRELLEKIAAEGEVVADGVLKVDRFLNHQVDPHLMKRIGEEFAAQFHRERPTKVLTLESSGISPALMAAYELGVPLVVARKRRPLTMTSEVYCAEVYSFTKKETNEIIVSRPLLDSSDRVLIIDDFLANGQAALGMVEVVRQAGADVVGIGIVIEKAFQDGGRLLRSQGFRVVSLARIASLSDGVIRFHEEVMS</sequence>
<organism>
    <name type="scientific">Geobacillus thermodenitrificans (strain NG80-2)</name>
    <dbReference type="NCBI Taxonomy" id="420246"/>
    <lineage>
        <taxon>Bacteria</taxon>
        <taxon>Bacillati</taxon>
        <taxon>Bacillota</taxon>
        <taxon>Bacilli</taxon>
        <taxon>Bacillales</taxon>
        <taxon>Anoxybacillaceae</taxon>
        <taxon>Geobacillus</taxon>
    </lineage>
</organism>
<comment type="function">
    <text evidence="1">Converts the preformed base xanthine, a product of nucleic acid breakdown, to xanthosine 5'-monophosphate (XMP), so it can be reused for RNA or DNA synthesis.</text>
</comment>
<comment type="catalytic activity">
    <reaction evidence="1">
        <text>XMP + diphosphate = xanthine + 5-phospho-alpha-D-ribose 1-diphosphate</text>
        <dbReference type="Rhea" id="RHEA:10800"/>
        <dbReference type="ChEBI" id="CHEBI:17712"/>
        <dbReference type="ChEBI" id="CHEBI:33019"/>
        <dbReference type="ChEBI" id="CHEBI:57464"/>
        <dbReference type="ChEBI" id="CHEBI:58017"/>
        <dbReference type="EC" id="2.4.2.22"/>
    </reaction>
</comment>
<comment type="pathway">
    <text evidence="1">Purine metabolism; XMP biosynthesis via salvage pathway; XMP from xanthine: step 1/1.</text>
</comment>
<comment type="subunit">
    <text evidence="1">Homodimer.</text>
</comment>
<comment type="subcellular location">
    <subcellularLocation>
        <location evidence="1">Cytoplasm</location>
    </subcellularLocation>
</comment>
<comment type="similarity">
    <text evidence="1">Belongs to the purine/pyrimidine phosphoribosyltransferase family. Xpt subfamily.</text>
</comment>
<keyword id="KW-0963">Cytoplasm</keyword>
<keyword id="KW-0328">Glycosyltransferase</keyword>
<keyword id="KW-0660">Purine salvage</keyword>
<keyword id="KW-0808">Transferase</keyword>
<accession>A4IN63</accession>
<reference key="1">
    <citation type="journal article" date="2007" name="Proc. Natl. Acad. Sci. U.S.A.">
        <title>Genome and proteome of long-chain alkane degrading Geobacillus thermodenitrificans NG80-2 isolated from a deep-subsurface oil reservoir.</title>
        <authorList>
            <person name="Feng L."/>
            <person name="Wang W."/>
            <person name="Cheng J."/>
            <person name="Ren Y."/>
            <person name="Zhao G."/>
            <person name="Gao C."/>
            <person name="Tang Y."/>
            <person name="Liu X."/>
            <person name="Han W."/>
            <person name="Peng X."/>
            <person name="Liu R."/>
            <person name="Wang L."/>
        </authorList>
    </citation>
    <scope>NUCLEOTIDE SEQUENCE [LARGE SCALE GENOMIC DNA]</scope>
    <source>
        <strain>NG80-2</strain>
    </source>
</reference>
<gene>
    <name evidence="1" type="primary">xpt</name>
    <name type="ordered locus">GTNG_1397</name>
</gene>